<comment type="function">
    <text evidence="1">Involved in peptide bond synthesis. Stimulates efficient translation and peptide-bond synthesis on native or reconstituted 70S ribosomes in vitro. Probably functions indirectly by altering the affinity of the ribosome for aminoacyl-tRNA, thus increasing their reactivity as acceptors for peptidyl transferase.</text>
</comment>
<comment type="pathway">
    <text evidence="1">Protein biosynthesis; polypeptide chain elongation.</text>
</comment>
<comment type="subcellular location">
    <subcellularLocation>
        <location evidence="1">Cytoplasm</location>
    </subcellularLocation>
</comment>
<comment type="similarity">
    <text evidence="1">Belongs to the elongation factor P family.</text>
</comment>
<keyword id="KW-0963">Cytoplasm</keyword>
<keyword id="KW-0251">Elongation factor</keyword>
<keyword id="KW-0648">Protein biosynthesis</keyword>
<sequence length="188" mass="20750">MASTSDIRNGLCIKFNHDIYKIIEFLHVKPGKGPAFVRTKLKSLTSGKVLDNTFSAGHKIDVIRVETHTFQFLYPEGDEFHFMNAETFEQISLNKNILDAPDLLKEGTNVMVQINTETDLPLSVDMPASVILEVTYAEPGVKGNTATNATKNATVETGANVNVPLFINEGDKIKIDTASGSYMERVKE</sequence>
<proteinExistence type="inferred from homology"/>
<protein>
    <recommendedName>
        <fullName evidence="1">Elongation factor P</fullName>
        <shortName evidence="1">EF-P</shortName>
    </recommendedName>
</protein>
<reference key="1">
    <citation type="journal article" date="2009" name="Appl. Environ. Microbiol.">
        <title>Novel features of the polysaccharide-digesting gliding bacterium Flavobacterium johnsoniae as revealed by genome sequence analysis.</title>
        <authorList>
            <person name="McBride M.J."/>
            <person name="Xie G."/>
            <person name="Martens E.C."/>
            <person name="Lapidus A."/>
            <person name="Henrissat B."/>
            <person name="Rhodes R.G."/>
            <person name="Goltsman E."/>
            <person name="Wang W."/>
            <person name="Xu J."/>
            <person name="Hunnicutt D.W."/>
            <person name="Staroscik A.M."/>
            <person name="Hoover T.R."/>
            <person name="Cheng Y.Q."/>
            <person name="Stein J.L."/>
        </authorList>
    </citation>
    <scope>NUCLEOTIDE SEQUENCE [LARGE SCALE GENOMIC DNA]</scope>
    <source>
        <strain>ATCC 17061 / DSM 2064 / JCM 8514 / BCRC 14874 / CCUG 350202 / NBRC 14942 / NCIMB 11054 / UW101</strain>
    </source>
</reference>
<feature type="chain" id="PRO_1000076514" description="Elongation factor P">
    <location>
        <begin position="1"/>
        <end position="188"/>
    </location>
</feature>
<accession>A5FFT9</accession>
<organism>
    <name type="scientific">Flavobacterium johnsoniae (strain ATCC 17061 / DSM 2064 / JCM 8514 / BCRC 14874 / CCUG 350202 / NBRC 14942 / NCIMB 11054 / UW101)</name>
    <name type="common">Cytophaga johnsonae</name>
    <dbReference type="NCBI Taxonomy" id="376686"/>
    <lineage>
        <taxon>Bacteria</taxon>
        <taxon>Pseudomonadati</taxon>
        <taxon>Bacteroidota</taxon>
        <taxon>Flavobacteriia</taxon>
        <taxon>Flavobacteriales</taxon>
        <taxon>Flavobacteriaceae</taxon>
        <taxon>Flavobacterium</taxon>
    </lineage>
</organism>
<gene>
    <name evidence="1" type="primary">efp</name>
    <name type="ordered locus">Fjoh_2901</name>
</gene>
<evidence type="ECO:0000255" key="1">
    <source>
        <dbReference type="HAMAP-Rule" id="MF_00141"/>
    </source>
</evidence>
<name>EFP_FLAJ1</name>
<dbReference type="EMBL" id="CP000685">
    <property type="protein sequence ID" value="ABQ05922.1"/>
    <property type="molecule type" value="Genomic_DNA"/>
</dbReference>
<dbReference type="RefSeq" id="WP_012024960.1">
    <property type="nucleotide sequence ID" value="NZ_MUGZ01000033.1"/>
</dbReference>
<dbReference type="SMR" id="A5FFT9"/>
<dbReference type="STRING" id="376686.Fjoh_2901"/>
<dbReference type="KEGG" id="fjo:Fjoh_2901"/>
<dbReference type="eggNOG" id="COG0231">
    <property type="taxonomic scope" value="Bacteria"/>
</dbReference>
<dbReference type="HOGENOM" id="CLU_074944_0_1_10"/>
<dbReference type="OrthoDB" id="9801844at2"/>
<dbReference type="UniPathway" id="UPA00345"/>
<dbReference type="Proteomes" id="UP000006694">
    <property type="component" value="Chromosome"/>
</dbReference>
<dbReference type="GO" id="GO:0005737">
    <property type="term" value="C:cytoplasm"/>
    <property type="evidence" value="ECO:0007669"/>
    <property type="project" value="UniProtKB-SubCell"/>
</dbReference>
<dbReference type="GO" id="GO:0003746">
    <property type="term" value="F:translation elongation factor activity"/>
    <property type="evidence" value="ECO:0007669"/>
    <property type="project" value="UniProtKB-UniRule"/>
</dbReference>
<dbReference type="GO" id="GO:0043043">
    <property type="term" value="P:peptide biosynthetic process"/>
    <property type="evidence" value="ECO:0007669"/>
    <property type="project" value="InterPro"/>
</dbReference>
<dbReference type="CDD" id="cd04470">
    <property type="entry name" value="S1_EF-P_repeat_1"/>
    <property type="match status" value="1"/>
</dbReference>
<dbReference type="CDD" id="cd05794">
    <property type="entry name" value="S1_EF-P_repeat_2"/>
    <property type="match status" value="1"/>
</dbReference>
<dbReference type="FunFam" id="2.30.30.30:FF:000003">
    <property type="entry name" value="Elongation factor P"/>
    <property type="match status" value="1"/>
</dbReference>
<dbReference type="FunFam" id="2.40.50.140:FF:000004">
    <property type="entry name" value="Elongation factor P"/>
    <property type="match status" value="1"/>
</dbReference>
<dbReference type="Gene3D" id="2.30.30.30">
    <property type="match status" value="1"/>
</dbReference>
<dbReference type="Gene3D" id="2.40.50.140">
    <property type="entry name" value="Nucleic acid-binding proteins"/>
    <property type="match status" value="2"/>
</dbReference>
<dbReference type="HAMAP" id="MF_00141">
    <property type="entry name" value="EF_P"/>
    <property type="match status" value="1"/>
</dbReference>
<dbReference type="InterPro" id="IPR015365">
    <property type="entry name" value="Elong-fact-P_C"/>
</dbReference>
<dbReference type="InterPro" id="IPR012340">
    <property type="entry name" value="NA-bd_OB-fold"/>
</dbReference>
<dbReference type="InterPro" id="IPR014722">
    <property type="entry name" value="Rib_uL2_dom2"/>
</dbReference>
<dbReference type="InterPro" id="IPR020599">
    <property type="entry name" value="Transl_elong_fac_P/YeiP"/>
</dbReference>
<dbReference type="InterPro" id="IPR013185">
    <property type="entry name" value="Transl_elong_KOW-like"/>
</dbReference>
<dbReference type="InterPro" id="IPR001059">
    <property type="entry name" value="Transl_elong_P/YeiP_cen"/>
</dbReference>
<dbReference type="InterPro" id="IPR013852">
    <property type="entry name" value="Transl_elong_P/YeiP_CS"/>
</dbReference>
<dbReference type="InterPro" id="IPR011768">
    <property type="entry name" value="Transl_elongation_fac_P"/>
</dbReference>
<dbReference type="InterPro" id="IPR008991">
    <property type="entry name" value="Translation_prot_SH3-like_sf"/>
</dbReference>
<dbReference type="NCBIfam" id="TIGR00038">
    <property type="entry name" value="efp"/>
    <property type="match status" value="1"/>
</dbReference>
<dbReference type="NCBIfam" id="NF001810">
    <property type="entry name" value="PRK00529.1"/>
    <property type="match status" value="1"/>
</dbReference>
<dbReference type="PANTHER" id="PTHR30053">
    <property type="entry name" value="ELONGATION FACTOR P"/>
    <property type="match status" value="1"/>
</dbReference>
<dbReference type="PANTHER" id="PTHR30053:SF12">
    <property type="entry name" value="ELONGATION FACTOR P (EF-P) FAMILY PROTEIN"/>
    <property type="match status" value="1"/>
</dbReference>
<dbReference type="Pfam" id="PF01132">
    <property type="entry name" value="EFP"/>
    <property type="match status" value="1"/>
</dbReference>
<dbReference type="Pfam" id="PF08207">
    <property type="entry name" value="EFP_N"/>
    <property type="match status" value="1"/>
</dbReference>
<dbReference type="Pfam" id="PF09285">
    <property type="entry name" value="Elong-fact-P_C"/>
    <property type="match status" value="1"/>
</dbReference>
<dbReference type="PIRSF" id="PIRSF005901">
    <property type="entry name" value="EF-P"/>
    <property type="match status" value="1"/>
</dbReference>
<dbReference type="SMART" id="SM01185">
    <property type="entry name" value="EFP"/>
    <property type="match status" value="1"/>
</dbReference>
<dbReference type="SMART" id="SM00841">
    <property type="entry name" value="Elong-fact-P_C"/>
    <property type="match status" value="1"/>
</dbReference>
<dbReference type="SUPFAM" id="SSF50249">
    <property type="entry name" value="Nucleic acid-binding proteins"/>
    <property type="match status" value="2"/>
</dbReference>
<dbReference type="SUPFAM" id="SSF50104">
    <property type="entry name" value="Translation proteins SH3-like domain"/>
    <property type="match status" value="1"/>
</dbReference>
<dbReference type="PROSITE" id="PS01275">
    <property type="entry name" value="EFP"/>
    <property type="match status" value="1"/>
</dbReference>